<protein>
    <recommendedName>
        <fullName>Probable serine/threonine-protein kinase abkB</fullName>
        <ecNumber>2.7.11.-</ecNumber>
    </recommendedName>
</protein>
<keyword id="KW-0067">ATP-binding</keyword>
<keyword id="KW-0175">Coiled coil</keyword>
<keyword id="KW-0418">Kinase</keyword>
<keyword id="KW-0547">Nucleotide-binding</keyword>
<keyword id="KW-1185">Reference proteome</keyword>
<keyword id="KW-0723">Serine/threonine-protein kinase</keyword>
<keyword id="KW-0808">Transferase</keyword>
<accession>Q54TR5</accession>
<name>ABKB_DICDI</name>
<comment type="similarity">
    <text evidence="4">Belongs to the protein kinase superfamily. ADCK protein kinase family.</text>
</comment>
<evidence type="ECO:0000250" key="1"/>
<evidence type="ECO:0000255" key="2"/>
<evidence type="ECO:0000256" key="3">
    <source>
        <dbReference type="SAM" id="MobiDB-lite"/>
    </source>
</evidence>
<evidence type="ECO:0000305" key="4"/>
<organism>
    <name type="scientific">Dictyostelium discoideum</name>
    <name type="common">Social amoeba</name>
    <dbReference type="NCBI Taxonomy" id="44689"/>
    <lineage>
        <taxon>Eukaryota</taxon>
        <taxon>Amoebozoa</taxon>
        <taxon>Evosea</taxon>
        <taxon>Eumycetozoa</taxon>
        <taxon>Dictyostelia</taxon>
        <taxon>Dictyosteliales</taxon>
        <taxon>Dictyosteliaceae</taxon>
        <taxon>Dictyostelium</taxon>
    </lineage>
</organism>
<sequence>MNQIHSTILKKGILNIKPQIRNITKCTNTINYNNNNINNRYFTSINKNKNIENLLQQQPQQQPQQQLQQQPILFVQNQNNINYFKREYTNIGGTSPNRQSVPENSTTKTTATATVETDNVVNSSTTFTLPKEVEEEIIDKNERGKEQEQENKQQKEQKDDNKSGSIFSIKGWLTISILSVLALGTKLVIDPPQNIDKLDLAFIRNLRVLYAGFKITFYYKYYLMGLNRGDEGFAENIQIAHKLAAKAMVDLCYQNKGIFIKVAQIIASLDHILPQEYIKSLSIFQDHAPFVTFEEVEKLFKIETGKHPDDMFIDFERLPINSASLAQVHKAKLKLENDEIIEVAVKVQYPGLMNKFQKDMDSLDNVLTYITLFFPSFQFSWILGEASSCLSQELDFVNEAKNSEKMKQLFIGNQQLSIPKVYWNHTTKRILTMEFIHGVRIDNREGLDKLGIDLKELYYLFSDIFAQQIFVHGFLHSDPHPGNLLVRKTPNGKPDLVLLDHGLYKKIDENVRLDFCHLWKSLCLGDAKTSEFYAERLGAGIYAKHLGILLNLNPSKSRENLRNMKRELKDQTLVVINEILKNLPKEILLVLKTNNLIRQITTHFGIENGFLNMAKTCIKGIYTGNDIITKLKYYLTLCIFNIEIKVIDFIKKRKPPQVEIPSTYHHHH</sequence>
<proteinExistence type="inferred from homology"/>
<feature type="chain" id="PRO_0000367577" description="Probable serine/threonine-protein kinase abkB">
    <location>
        <begin position="1"/>
        <end position="668"/>
    </location>
</feature>
<feature type="domain" description="Protein kinase">
    <location>
        <begin position="314"/>
        <end position="668"/>
    </location>
</feature>
<feature type="region of interest" description="Disordered" evidence="3">
    <location>
        <begin position="88"/>
        <end position="111"/>
    </location>
</feature>
<feature type="region of interest" description="Disordered" evidence="3">
    <location>
        <begin position="132"/>
        <end position="162"/>
    </location>
</feature>
<feature type="coiled-coil region" evidence="2">
    <location>
        <begin position="131"/>
        <end position="163"/>
    </location>
</feature>
<feature type="compositionally biased region" description="Polar residues" evidence="3">
    <location>
        <begin position="91"/>
        <end position="105"/>
    </location>
</feature>
<feature type="compositionally biased region" description="Basic and acidic residues" evidence="3">
    <location>
        <begin position="138"/>
        <end position="162"/>
    </location>
</feature>
<feature type="active site" description="Proton acceptor" evidence="1">
    <location>
        <position position="478"/>
    </location>
</feature>
<feature type="binding site" evidence="1">
    <location>
        <begin position="320"/>
        <end position="328"/>
    </location>
    <ligand>
        <name>ATP</name>
        <dbReference type="ChEBI" id="CHEBI:30616"/>
    </ligand>
</feature>
<feature type="binding site" evidence="1">
    <location>
        <position position="346"/>
    </location>
    <ligand>
        <name>ATP</name>
        <dbReference type="ChEBI" id="CHEBI:30616"/>
    </ligand>
</feature>
<dbReference type="EC" id="2.7.11.-"/>
<dbReference type="EMBL" id="AAFI02000042">
    <property type="protein sequence ID" value="EAL66661.1"/>
    <property type="molecule type" value="Genomic_DNA"/>
</dbReference>
<dbReference type="RefSeq" id="XP_640526.1">
    <property type="nucleotide sequence ID" value="XM_635434.1"/>
</dbReference>
<dbReference type="SMR" id="Q54TR5"/>
<dbReference type="STRING" id="44689.Q54TR5"/>
<dbReference type="PaxDb" id="44689-DDB0229418"/>
<dbReference type="EnsemblProtists" id="EAL66661">
    <property type="protein sequence ID" value="EAL66661"/>
    <property type="gene ID" value="DDB_G0281799"/>
</dbReference>
<dbReference type="GeneID" id="8623136"/>
<dbReference type="KEGG" id="ddi:DDB_G0281799"/>
<dbReference type="dictyBase" id="DDB_G0281799">
    <property type="gene designation" value="abkB"/>
</dbReference>
<dbReference type="VEuPathDB" id="AmoebaDB:DDB_G0281799"/>
<dbReference type="eggNOG" id="KOG1235">
    <property type="taxonomic scope" value="Eukaryota"/>
</dbReference>
<dbReference type="HOGENOM" id="CLU_006533_2_0_1"/>
<dbReference type="InParanoid" id="Q54TR5"/>
<dbReference type="OMA" id="MAKTCIK"/>
<dbReference type="PhylomeDB" id="Q54TR5"/>
<dbReference type="PRO" id="PR:Q54TR5"/>
<dbReference type="Proteomes" id="UP000002195">
    <property type="component" value="Chromosome 3"/>
</dbReference>
<dbReference type="GO" id="GO:0005524">
    <property type="term" value="F:ATP binding"/>
    <property type="evidence" value="ECO:0007669"/>
    <property type="project" value="UniProtKB-KW"/>
</dbReference>
<dbReference type="GO" id="GO:0004674">
    <property type="term" value="F:protein serine/threonine kinase activity"/>
    <property type="evidence" value="ECO:0007669"/>
    <property type="project" value="UniProtKB-KW"/>
</dbReference>
<dbReference type="CDD" id="cd13969">
    <property type="entry name" value="ADCK1-like"/>
    <property type="match status" value="1"/>
</dbReference>
<dbReference type="InterPro" id="IPR004147">
    <property type="entry name" value="ABC1_dom"/>
</dbReference>
<dbReference type="InterPro" id="IPR045307">
    <property type="entry name" value="ADCK1_dom"/>
</dbReference>
<dbReference type="InterPro" id="IPR011009">
    <property type="entry name" value="Kinase-like_dom_sf"/>
</dbReference>
<dbReference type="InterPro" id="IPR051130">
    <property type="entry name" value="Mito_struct-func_regulator"/>
</dbReference>
<dbReference type="PANTHER" id="PTHR43173">
    <property type="entry name" value="ABC1 FAMILY PROTEIN"/>
    <property type="match status" value="1"/>
</dbReference>
<dbReference type="PANTHER" id="PTHR43173:SF41">
    <property type="entry name" value="SERINE_THREONINE-PROTEIN KINASE ABKB-RELATED"/>
    <property type="match status" value="1"/>
</dbReference>
<dbReference type="Pfam" id="PF03109">
    <property type="entry name" value="ABC1"/>
    <property type="match status" value="1"/>
</dbReference>
<dbReference type="SUPFAM" id="SSF56112">
    <property type="entry name" value="Protein kinase-like (PK-like)"/>
    <property type="match status" value="1"/>
</dbReference>
<gene>
    <name type="primary">abkB</name>
    <name type="synonym">adckB1</name>
    <name type="ORF">DDB_G0281799</name>
</gene>
<reference key="1">
    <citation type="journal article" date="2005" name="Nature">
        <title>The genome of the social amoeba Dictyostelium discoideum.</title>
        <authorList>
            <person name="Eichinger L."/>
            <person name="Pachebat J.A."/>
            <person name="Gloeckner G."/>
            <person name="Rajandream M.A."/>
            <person name="Sucgang R."/>
            <person name="Berriman M."/>
            <person name="Song J."/>
            <person name="Olsen R."/>
            <person name="Szafranski K."/>
            <person name="Xu Q."/>
            <person name="Tunggal B."/>
            <person name="Kummerfeld S."/>
            <person name="Madera M."/>
            <person name="Konfortov B.A."/>
            <person name="Rivero F."/>
            <person name="Bankier A.T."/>
            <person name="Lehmann R."/>
            <person name="Hamlin N."/>
            <person name="Davies R."/>
            <person name="Gaudet P."/>
            <person name="Fey P."/>
            <person name="Pilcher K."/>
            <person name="Chen G."/>
            <person name="Saunders D."/>
            <person name="Sodergren E.J."/>
            <person name="Davis P."/>
            <person name="Kerhornou A."/>
            <person name="Nie X."/>
            <person name="Hall N."/>
            <person name="Anjard C."/>
            <person name="Hemphill L."/>
            <person name="Bason N."/>
            <person name="Farbrother P."/>
            <person name="Desany B."/>
            <person name="Just E."/>
            <person name="Morio T."/>
            <person name="Rost R."/>
            <person name="Churcher C.M."/>
            <person name="Cooper J."/>
            <person name="Haydock S."/>
            <person name="van Driessche N."/>
            <person name="Cronin A."/>
            <person name="Goodhead I."/>
            <person name="Muzny D.M."/>
            <person name="Mourier T."/>
            <person name="Pain A."/>
            <person name="Lu M."/>
            <person name="Harper D."/>
            <person name="Lindsay R."/>
            <person name="Hauser H."/>
            <person name="James K.D."/>
            <person name="Quiles M."/>
            <person name="Madan Babu M."/>
            <person name="Saito T."/>
            <person name="Buchrieser C."/>
            <person name="Wardroper A."/>
            <person name="Felder M."/>
            <person name="Thangavelu M."/>
            <person name="Johnson D."/>
            <person name="Knights A."/>
            <person name="Loulseged H."/>
            <person name="Mungall K.L."/>
            <person name="Oliver K."/>
            <person name="Price C."/>
            <person name="Quail M.A."/>
            <person name="Urushihara H."/>
            <person name="Hernandez J."/>
            <person name="Rabbinowitsch E."/>
            <person name="Steffen D."/>
            <person name="Sanders M."/>
            <person name="Ma J."/>
            <person name="Kohara Y."/>
            <person name="Sharp S."/>
            <person name="Simmonds M.N."/>
            <person name="Spiegler S."/>
            <person name="Tivey A."/>
            <person name="Sugano S."/>
            <person name="White B."/>
            <person name="Walker D."/>
            <person name="Woodward J.R."/>
            <person name="Winckler T."/>
            <person name="Tanaka Y."/>
            <person name="Shaulsky G."/>
            <person name="Schleicher M."/>
            <person name="Weinstock G.M."/>
            <person name="Rosenthal A."/>
            <person name="Cox E.C."/>
            <person name="Chisholm R.L."/>
            <person name="Gibbs R.A."/>
            <person name="Loomis W.F."/>
            <person name="Platzer M."/>
            <person name="Kay R.R."/>
            <person name="Williams J.G."/>
            <person name="Dear P.H."/>
            <person name="Noegel A.A."/>
            <person name="Barrell B.G."/>
            <person name="Kuspa A."/>
        </authorList>
    </citation>
    <scope>NUCLEOTIDE SEQUENCE [LARGE SCALE GENOMIC DNA]</scope>
    <source>
        <strain>AX4</strain>
    </source>
</reference>
<reference key="2">
    <citation type="journal article" date="2006" name="PLoS Genet.">
        <title>The dictyostelium kinome -- analysis of the protein kinases from a simple model organism.</title>
        <authorList>
            <person name="Goldberg J.M."/>
            <person name="Manning G."/>
            <person name="Liu A."/>
            <person name="Fey P."/>
            <person name="Pilcher K.E."/>
            <person name="Xu Y."/>
            <person name="Smith J.L."/>
        </authorList>
    </citation>
    <scope>GENE FAMILY</scope>
    <scope>NOMENCLATURE</scope>
</reference>